<protein>
    <recommendedName>
        <fullName evidence="1">Acetaldehyde dehydrogenase 2</fullName>
        <ecNumber evidence="1">1.2.1.10</ecNumber>
    </recommendedName>
    <alternativeName>
        <fullName evidence="1">Acetaldehyde dehydrogenase [acetylating] 2</fullName>
    </alternativeName>
</protein>
<sequence>MATDNTKRKAAIIGSGNIGTDLMIKIMRRSRHLDVAAMVGIDPASDGLARAAKLGVATTHEGVQGLTRLSVFDEIDFVFDATSAGAHVKNDAFLRTLKPGIRVIDLTPAAIGPYCVPVVNLDAHLDAPNVNMVTCGGQATIPMVAAVSRVAKVHYAEIVASISSRSAGPGTRANIDEFTETTSKAIEAVGGAGKGKAIIVLNPAEPPLMMRDTVYVLSEAADRAQIEASVERMAAAVQAYVPGYRLKQSVQFDDIPANAPLHIPGLGRFSGLKTSVFIEVEGAAHYLPAYAGNLDIMTSAALATAERMAASLVNA</sequence>
<proteinExistence type="inferred from homology"/>
<feature type="chain" id="PRO_1000187028" description="Acetaldehyde dehydrogenase 2">
    <location>
        <begin position="1"/>
        <end position="315"/>
    </location>
</feature>
<feature type="active site" description="Acyl-thioester intermediate" evidence="1">
    <location>
        <position position="135"/>
    </location>
</feature>
<feature type="binding site" evidence="1">
    <location>
        <begin position="15"/>
        <end position="18"/>
    </location>
    <ligand>
        <name>NAD(+)</name>
        <dbReference type="ChEBI" id="CHEBI:57540"/>
    </ligand>
</feature>
<feature type="binding site" evidence="1">
    <location>
        <begin position="166"/>
        <end position="174"/>
    </location>
    <ligand>
        <name>NAD(+)</name>
        <dbReference type="ChEBI" id="CHEBI:57540"/>
    </ligand>
</feature>
<feature type="binding site" evidence="1">
    <location>
        <position position="293"/>
    </location>
    <ligand>
        <name>NAD(+)</name>
        <dbReference type="ChEBI" id="CHEBI:57540"/>
    </ligand>
</feature>
<accession>B2JQV9</accession>
<comment type="catalytic activity">
    <reaction evidence="1">
        <text>acetaldehyde + NAD(+) + CoA = acetyl-CoA + NADH + H(+)</text>
        <dbReference type="Rhea" id="RHEA:23288"/>
        <dbReference type="ChEBI" id="CHEBI:15343"/>
        <dbReference type="ChEBI" id="CHEBI:15378"/>
        <dbReference type="ChEBI" id="CHEBI:57287"/>
        <dbReference type="ChEBI" id="CHEBI:57288"/>
        <dbReference type="ChEBI" id="CHEBI:57540"/>
        <dbReference type="ChEBI" id="CHEBI:57945"/>
        <dbReference type="EC" id="1.2.1.10"/>
    </reaction>
</comment>
<comment type="similarity">
    <text evidence="1">Belongs to the acetaldehyde dehydrogenase family.</text>
</comment>
<keyword id="KW-0058">Aromatic hydrocarbons catabolism</keyword>
<keyword id="KW-0520">NAD</keyword>
<keyword id="KW-0560">Oxidoreductase</keyword>
<keyword id="KW-1185">Reference proteome</keyword>
<name>ACDH2_PARP8</name>
<organism>
    <name type="scientific">Paraburkholderia phymatum (strain DSM 17167 / CIP 108236 / LMG 21445 / STM815)</name>
    <name type="common">Burkholderia phymatum</name>
    <dbReference type="NCBI Taxonomy" id="391038"/>
    <lineage>
        <taxon>Bacteria</taxon>
        <taxon>Pseudomonadati</taxon>
        <taxon>Pseudomonadota</taxon>
        <taxon>Betaproteobacteria</taxon>
        <taxon>Burkholderiales</taxon>
        <taxon>Burkholderiaceae</taxon>
        <taxon>Paraburkholderia</taxon>
    </lineage>
</organism>
<evidence type="ECO:0000255" key="1">
    <source>
        <dbReference type="HAMAP-Rule" id="MF_01657"/>
    </source>
</evidence>
<reference key="1">
    <citation type="journal article" date="2014" name="Stand. Genomic Sci.">
        <title>Complete genome sequence of Burkholderia phymatum STM815(T), a broad host range and efficient nitrogen-fixing symbiont of Mimosa species.</title>
        <authorList>
            <person name="Moulin L."/>
            <person name="Klonowska A."/>
            <person name="Caroline B."/>
            <person name="Booth K."/>
            <person name="Vriezen J.A."/>
            <person name="Melkonian R."/>
            <person name="James E.K."/>
            <person name="Young J.P."/>
            <person name="Bena G."/>
            <person name="Hauser L."/>
            <person name="Land M."/>
            <person name="Kyrpides N."/>
            <person name="Bruce D."/>
            <person name="Chain P."/>
            <person name="Copeland A."/>
            <person name="Pitluck S."/>
            <person name="Woyke T."/>
            <person name="Lizotte-Waniewski M."/>
            <person name="Bristow J."/>
            <person name="Riley M."/>
        </authorList>
    </citation>
    <scope>NUCLEOTIDE SEQUENCE [LARGE SCALE GENOMIC DNA]</scope>
    <source>
        <strain>DSM 17167 / CIP 108236 / LMG 21445 / STM815</strain>
    </source>
</reference>
<dbReference type="EC" id="1.2.1.10" evidence="1"/>
<dbReference type="EMBL" id="CP001044">
    <property type="protein sequence ID" value="ACC73650.1"/>
    <property type="molecule type" value="Genomic_DNA"/>
</dbReference>
<dbReference type="RefSeq" id="WP_012403822.1">
    <property type="nucleotide sequence ID" value="NC_010623.1"/>
</dbReference>
<dbReference type="SMR" id="B2JQV9"/>
<dbReference type="STRING" id="391038.Bphy_4538"/>
<dbReference type="KEGG" id="bph:Bphy_4538"/>
<dbReference type="eggNOG" id="COG4569">
    <property type="taxonomic scope" value="Bacteria"/>
</dbReference>
<dbReference type="HOGENOM" id="CLU_062208_0_0_4"/>
<dbReference type="OrthoDB" id="9786743at2"/>
<dbReference type="Proteomes" id="UP000001192">
    <property type="component" value="Chromosome 2"/>
</dbReference>
<dbReference type="GO" id="GO:0008774">
    <property type="term" value="F:acetaldehyde dehydrogenase (acetylating) activity"/>
    <property type="evidence" value="ECO:0007669"/>
    <property type="project" value="UniProtKB-UniRule"/>
</dbReference>
<dbReference type="GO" id="GO:0051287">
    <property type="term" value="F:NAD binding"/>
    <property type="evidence" value="ECO:0007669"/>
    <property type="project" value="UniProtKB-UniRule"/>
</dbReference>
<dbReference type="GO" id="GO:0009056">
    <property type="term" value="P:catabolic process"/>
    <property type="evidence" value="ECO:0007669"/>
    <property type="project" value="UniProtKB-KW"/>
</dbReference>
<dbReference type="CDD" id="cd23933">
    <property type="entry name" value="ALDH_C"/>
    <property type="match status" value="1"/>
</dbReference>
<dbReference type="Gene3D" id="3.30.360.10">
    <property type="entry name" value="Dihydrodipicolinate Reductase, domain 2"/>
    <property type="match status" value="1"/>
</dbReference>
<dbReference type="Gene3D" id="3.40.50.720">
    <property type="entry name" value="NAD(P)-binding Rossmann-like Domain"/>
    <property type="match status" value="1"/>
</dbReference>
<dbReference type="HAMAP" id="MF_01657">
    <property type="entry name" value="Ac_ald_DH_ac"/>
    <property type="match status" value="1"/>
</dbReference>
<dbReference type="InterPro" id="IPR003361">
    <property type="entry name" value="Acetaldehyde_dehydrogenase"/>
</dbReference>
<dbReference type="InterPro" id="IPR015426">
    <property type="entry name" value="Acetylaldehyde_DH_C"/>
</dbReference>
<dbReference type="InterPro" id="IPR036291">
    <property type="entry name" value="NAD(P)-bd_dom_sf"/>
</dbReference>
<dbReference type="InterPro" id="IPR000534">
    <property type="entry name" value="Semialdehyde_DH_NAD-bd"/>
</dbReference>
<dbReference type="NCBIfam" id="TIGR03215">
    <property type="entry name" value="ac_ald_DH_ac"/>
    <property type="match status" value="1"/>
</dbReference>
<dbReference type="NCBIfam" id="NF006157">
    <property type="entry name" value="PRK08300.1"/>
    <property type="match status" value="1"/>
</dbReference>
<dbReference type="Pfam" id="PF09290">
    <property type="entry name" value="AcetDehyd-dimer"/>
    <property type="match status" value="1"/>
</dbReference>
<dbReference type="Pfam" id="PF01118">
    <property type="entry name" value="Semialdhyde_dh"/>
    <property type="match status" value="1"/>
</dbReference>
<dbReference type="PIRSF" id="PIRSF015689">
    <property type="entry name" value="Actaldh_dh_actl"/>
    <property type="match status" value="1"/>
</dbReference>
<dbReference type="SMART" id="SM00859">
    <property type="entry name" value="Semialdhyde_dh"/>
    <property type="match status" value="1"/>
</dbReference>
<dbReference type="SUPFAM" id="SSF55347">
    <property type="entry name" value="Glyceraldehyde-3-phosphate dehydrogenase-like, C-terminal domain"/>
    <property type="match status" value="1"/>
</dbReference>
<dbReference type="SUPFAM" id="SSF51735">
    <property type="entry name" value="NAD(P)-binding Rossmann-fold domains"/>
    <property type="match status" value="1"/>
</dbReference>
<gene>
    <name type="ordered locus">Bphy_4538</name>
</gene>